<organism>
    <name type="scientific">Bos taurus</name>
    <name type="common">Bovine</name>
    <dbReference type="NCBI Taxonomy" id="9913"/>
    <lineage>
        <taxon>Eukaryota</taxon>
        <taxon>Metazoa</taxon>
        <taxon>Chordata</taxon>
        <taxon>Craniata</taxon>
        <taxon>Vertebrata</taxon>
        <taxon>Euteleostomi</taxon>
        <taxon>Mammalia</taxon>
        <taxon>Eutheria</taxon>
        <taxon>Laurasiatheria</taxon>
        <taxon>Artiodactyla</taxon>
        <taxon>Ruminantia</taxon>
        <taxon>Pecora</taxon>
        <taxon>Bovidae</taxon>
        <taxon>Bovinae</taxon>
        <taxon>Bos</taxon>
    </lineage>
</organism>
<protein>
    <recommendedName>
        <fullName>Transaldolase</fullName>
        <ecNumber>2.2.1.2</ecNumber>
    </recommendedName>
</protein>
<reference key="1">
    <citation type="submission" date="2005-11" db="EMBL/GenBank/DDBJ databases">
        <authorList>
            <consortium name="NIH - Mammalian Gene Collection (MGC) project"/>
        </authorList>
    </citation>
    <scope>NUCLEOTIDE SEQUENCE [LARGE SCALE MRNA]</scope>
    <source>
        <strain>Crossbred X Angus</strain>
        <tissue>Liver</tissue>
    </source>
</reference>
<sequence>MSGSPVKRQRMENALDQLKQFTTVVADTGDFHAIDEYKPQDATTNPSLILAAAQMPTYQELVEEAIAYGRKLGGSQEEQITNAIDKLFVLFGAEILKKIPGRVSTEVDARLSFDKDAMVARARRLIELYKEAGISKERILIKLSSTWEGIQAGKELEEHHGIRCNMTLLFSFAQAVACAEAGVTLISPFVGRILDWHVANTDKKSYETQEDPGVKSVTKIYNYYKKFGYKTIVMGASFRNTGEIKALAGCDFLTISPQLLGELLKDHSKLTPVLSAKAAQASDLEKIQLDEKAFRWLHNEDRMAVEKLSDGIRRFAADAVKLERMLRERMFSAENGK</sequence>
<evidence type="ECO:0000250" key="1"/>
<evidence type="ECO:0000250" key="2">
    <source>
        <dbReference type="UniProtKB" id="P37837"/>
    </source>
</evidence>
<evidence type="ECO:0000250" key="3">
    <source>
        <dbReference type="UniProtKB" id="Q93092"/>
    </source>
</evidence>
<evidence type="ECO:0000305" key="4"/>
<comment type="function">
    <text evidence="1">Transaldolase is important for the balance of metabolites in the pentose-phosphate pathway.</text>
</comment>
<comment type="catalytic activity">
    <reaction>
        <text>D-sedoheptulose 7-phosphate + D-glyceraldehyde 3-phosphate = D-erythrose 4-phosphate + beta-D-fructose 6-phosphate</text>
        <dbReference type="Rhea" id="RHEA:17053"/>
        <dbReference type="ChEBI" id="CHEBI:16897"/>
        <dbReference type="ChEBI" id="CHEBI:57483"/>
        <dbReference type="ChEBI" id="CHEBI:57634"/>
        <dbReference type="ChEBI" id="CHEBI:59776"/>
        <dbReference type="EC" id="2.2.1.2"/>
    </reaction>
</comment>
<comment type="pathway">
    <text>Carbohydrate degradation; pentose phosphate pathway; D-glyceraldehyde 3-phosphate and beta-D-fructose 6-phosphate from D-ribose 5-phosphate and D-xylulose 5-phosphate (non-oxidative stage): step 2/3.</text>
</comment>
<comment type="subunit">
    <text evidence="1">Homodimer.</text>
</comment>
<comment type="subcellular location">
    <subcellularLocation>
        <location evidence="4">Cytoplasm</location>
    </subcellularLocation>
</comment>
<comment type="similarity">
    <text evidence="4">Belongs to the transaldolase family. Type 1 subfamily.</text>
</comment>
<gene>
    <name type="primary">TALDO1</name>
</gene>
<name>TALDO_BOVIN</name>
<keyword id="KW-0007">Acetylation</keyword>
<keyword id="KW-0963">Cytoplasm</keyword>
<keyword id="KW-0570">Pentose shunt</keyword>
<keyword id="KW-0597">Phosphoprotein</keyword>
<keyword id="KW-1185">Reference proteome</keyword>
<keyword id="KW-0704">Schiff base</keyword>
<keyword id="KW-0808">Transferase</keyword>
<accession>Q2TBL6</accession>
<feature type="chain" id="PRO_0000246173" description="Transaldolase">
    <location>
        <begin position="1"/>
        <end position="337"/>
    </location>
</feature>
<feature type="active site" description="Schiff-base intermediate with substrate" evidence="1">
    <location>
        <position position="142"/>
    </location>
</feature>
<feature type="modified residue" description="N6-acetyllysine" evidence="3">
    <location>
        <position position="115"/>
    </location>
</feature>
<feature type="modified residue" description="N6-acetyllysine" evidence="2">
    <location>
        <position position="219"/>
    </location>
</feature>
<feature type="modified residue" description="Phosphoserine" evidence="2">
    <location>
        <position position="237"/>
    </location>
</feature>
<feature type="modified residue" description="Phosphoserine" evidence="2">
    <location>
        <position position="256"/>
    </location>
</feature>
<feature type="modified residue" description="N6-acetyllysine" evidence="2">
    <location>
        <position position="269"/>
    </location>
</feature>
<feature type="modified residue" description="N6-acetyllysine" evidence="2">
    <location>
        <position position="286"/>
    </location>
</feature>
<feature type="modified residue" description="N6-acetyllysine" evidence="2">
    <location>
        <position position="321"/>
    </location>
</feature>
<proteinExistence type="evidence at transcript level"/>
<dbReference type="EC" id="2.2.1.2"/>
<dbReference type="EMBL" id="BC109965">
    <property type="protein sequence ID" value="AAI09966.1"/>
    <property type="molecule type" value="mRNA"/>
</dbReference>
<dbReference type="RefSeq" id="NP_001030360.2">
    <property type="nucleotide sequence ID" value="NM_001035283.2"/>
</dbReference>
<dbReference type="SMR" id="Q2TBL6"/>
<dbReference type="FunCoup" id="Q2TBL6">
    <property type="interactions" value="2228"/>
</dbReference>
<dbReference type="STRING" id="9913.ENSBTAP00000013650"/>
<dbReference type="PaxDb" id="9913-ENSBTAP00000013650"/>
<dbReference type="PeptideAtlas" id="Q2TBL6"/>
<dbReference type="GeneID" id="513453"/>
<dbReference type="KEGG" id="bta:513453"/>
<dbReference type="CTD" id="6888"/>
<dbReference type="eggNOG" id="KOG2772">
    <property type="taxonomic scope" value="Eukaryota"/>
</dbReference>
<dbReference type="InParanoid" id="Q2TBL6"/>
<dbReference type="OrthoDB" id="2015515at2759"/>
<dbReference type="UniPathway" id="UPA00115">
    <property type="reaction ID" value="UER00414"/>
</dbReference>
<dbReference type="Proteomes" id="UP000009136">
    <property type="component" value="Unplaced"/>
</dbReference>
<dbReference type="GO" id="GO:0005737">
    <property type="term" value="C:cytoplasm"/>
    <property type="evidence" value="ECO:0007669"/>
    <property type="project" value="UniProtKB-SubCell"/>
</dbReference>
<dbReference type="GO" id="GO:0005634">
    <property type="term" value="C:nucleus"/>
    <property type="evidence" value="ECO:0000318"/>
    <property type="project" value="GO_Central"/>
</dbReference>
<dbReference type="GO" id="GO:0004801">
    <property type="term" value="F:transaldolase activity"/>
    <property type="evidence" value="ECO:0000318"/>
    <property type="project" value="GO_Central"/>
</dbReference>
<dbReference type="GO" id="GO:0005975">
    <property type="term" value="P:carbohydrate metabolic process"/>
    <property type="evidence" value="ECO:0007669"/>
    <property type="project" value="InterPro"/>
</dbReference>
<dbReference type="GO" id="GO:0009052">
    <property type="term" value="P:pentose-phosphate shunt, non-oxidative branch"/>
    <property type="evidence" value="ECO:0000318"/>
    <property type="project" value="GO_Central"/>
</dbReference>
<dbReference type="CDD" id="cd00957">
    <property type="entry name" value="Transaldolase_TalAB"/>
    <property type="match status" value="1"/>
</dbReference>
<dbReference type="FunFam" id="3.20.20.70:FF:000002">
    <property type="entry name" value="Transaldolase"/>
    <property type="match status" value="1"/>
</dbReference>
<dbReference type="Gene3D" id="3.20.20.70">
    <property type="entry name" value="Aldolase class I"/>
    <property type="match status" value="1"/>
</dbReference>
<dbReference type="HAMAP" id="MF_00492">
    <property type="entry name" value="Transaldolase_1"/>
    <property type="match status" value="1"/>
</dbReference>
<dbReference type="InterPro" id="IPR013785">
    <property type="entry name" value="Aldolase_TIM"/>
</dbReference>
<dbReference type="InterPro" id="IPR001585">
    <property type="entry name" value="TAL/FSA"/>
</dbReference>
<dbReference type="InterPro" id="IPR004730">
    <property type="entry name" value="Transaldolase_1"/>
</dbReference>
<dbReference type="InterPro" id="IPR018225">
    <property type="entry name" value="Transaldolase_AS"/>
</dbReference>
<dbReference type="NCBIfam" id="NF009001">
    <property type="entry name" value="PRK12346.1"/>
    <property type="match status" value="1"/>
</dbReference>
<dbReference type="NCBIfam" id="TIGR00874">
    <property type="entry name" value="talAB"/>
    <property type="match status" value="1"/>
</dbReference>
<dbReference type="PANTHER" id="PTHR10683">
    <property type="entry name" value="TRANSALDOLASE"/>
    <property type="match status" value="1"/>
</dbReference>
<dbReference type="PANTHER" id="PTHR10683:SF18">
    <property type="entry name" value="TRANSALDOLASE"/>
    <property type="match status" value="1"/>
</dbReference>
<dbReference type="Pfam" id="PF00923">
    <property type="entry name" value="TAL_FSA"/>
    <property type="match status" value="1"/>
</dbReference>
<dbReference type="SUPFAM" id="SSF51569">
    <property type="entry name" value="Aldolase"/>
    <property type="match status" value="1"/>
</dbReference>
<dbReference type="PROSITE" id="PS01054">
    <property type="entry name" value="TRANSALDOLASE_1"/>
    <property type="match status" value="1"/>
</dbReference>
<dbReference type="PROSITE" id="PS00958">
    <property type="entry name" value="TRANSALDOLASE_2"/>
    <property type="match status" value="1"/>
</dbReference>